<gene>
    <name evidence="1" type="primary">ffh</name>
    <name type="ordered locus">Z3904</name>
    <name type="ordered locus">ECs3473</name>
</gene>
<keyword id="KW-0963">Cytoplasm</keyword>
<keyword id="KW-0342">GTP-binding</keyword>
<keyword id="KW-0378">Hydrolase</keyword>
<keyword id="KW-0547">Nucleotide-binding</keyword>
<keyword id="KW-1185">Reference proteome</keyword>
<keyword id="KW-0687">Ribonucleoprotein</keyword>
<keyword id="KW-0694">RNA-binding</keyword>
<keyword id="KW-0733">Signal recognition particle</keyword>
<accession>P0AGD9</accession>
<accession>P07019</accession>
<accession>P77007</accession>
<accession>P77008</accession>
<comment type="function">
    <text evidence="1">Involved in targeting and insertion of nascent membrane proteins into the cytoplasmic membrane. Binds to the hydrophobic signal sequence of the ribosome-nascent chain (RNC) as it emerges from the ribosomes. The SRP-RNC complex is then targeted to the cytoplasmic membrane where it interacts with the SRP receptor FtsY. Interaction with FtsY leads to the transfer of the RNC complex to the Sec translocase for insertion into the membrane, the hydrolysis of GTP by both Ffh and FtsY, and the dissociation of the SRP-FtsY complex into the individual components.</text>
</comment>
<comment type="catalytic activity">
    <reaction evidence="1">
        <text>GTP + H2O = GDP + phosphate + H(+)</text>
        <dbReference type="Rhea" id="RHEA:19669"/>
        <dbReference type="ChEBI" id="CHEBI:15377"/>
        <dbReference type="ChEBI" id="CHEBI:15378"/>
        <dbReference type="ChEBI" id="CHEBI:37565"/>
        <dbReference type="ChEBI" id="CHEBI:43474"/>
        <dbReference type="ChEBI" id="CHEBI:58189"/>
        <dbReference type="EC" id="3.6.5.4"/>
    </reaction>
</comment>
<comment type="subunit">
    <text evidence="1">Part of the signal recognition particle protein translocation system, which is composed of SRP and FtsY. SRP is a ribonucleoprotein composed of Ffh and a 4.5S RNA molecule.</text>
</comment>
<comment type="subcellular location">
    <subcellularLocation>
        <location evidence="1">Cytoplasm</location>
    </subcellularLocation>
    <text evidence="1">The SRP-RNC complex is targeted to the cytoplasmic membrane.</text>
</comment>
<comment type="domain">
    <text evidence="1">Composed of three domains: the N-terminal N domain, which is responsible for interactions with the ribosome, the central G domain, which binds GTP, and the C-terminal M domain, which binds the RNA and the signal sequence of the RNC.</text>
</comment>
<comment type="similarity">
    <text evidence="1">Belongs to the GTP-binding SRP family. SRP54 subfamily.</text>
</comment>
<evidence type="ECO:0000255" key="1">
    <source>
        <dbReference type="HAMAP-Rule" id="MF_00306"/>
    </source>
</evidence>
<feature type="chain" id="PRO_0000101154" description="Signal recognition particle protein">
    <location>
        <begin position="1"/>
        <end position="453"/>
    </location>
</feature>
<feature type="binding site" evidence="1">
    <location>
        <begin position="107"/>
        <end position="114"/>
    </location>
    <ligand>
        <name>GTP</name>
        <dbReference type="ChEBI" id="CHEBI:37565"/>
    </ligand>
</feature>
<feature type="binding site" evidence="1">
    <location>
        <begin position="190"/>
        <end position="194"/>
    </location>
    <ligand>
        <name>GTP</name>
        <dbReference type="ChEBI" id="CHEBI:37565"/>
    </ligand>
</feature>
<feature type="binding site" evidence="1">
    <location>
        <begin position="248"/>
        <end position="251"/>
    </location>
    <ligand>
        <name>GTP</name>
        <dbReference type="ChEBI" id="CHEBI:37565"/>
    </ligand>
</feature>
<dbReference type="EC" id="3.6.5.4" evidence="1"/>
<dbReference type="EMBL" id="AE005174">
    <property type="protein sequence ID" value="AAG57721.1"/>
    <property type="molecule type" value="Genomic_DNA"/>
</dbReference>
<dbReference type="EMBL" id="BA000007">
    <property type="protein sequence ID" value="BAB36896.1"/>
    <property type="molecule type" value="Genomic_DNA"/>
</dbReference>
<dbReference type="PIR" id="A91063">
    <property type="entry name" value="A91063"/>
</dbReference>
<dbReference type="PIR" id="E85907">
    <property type="entry name" value="E85907"/>
</dbReference>
<dbReference type="RefSeq" id="NP_311500.1">
    <property type="nucleotide sequence ID" value="NC_002695.1"/>
</dbReference>
<dbReference type="RefSeq" id="WP_000460035.1">
    <property type="nucleotide sequence ID" value="NZ_VOAI01000040.1"/>
</dbReference>
<dbReference type="SMR" id="P0AGD9"/>
<dbReference type="STRING" id="155864.Z3904"/>
<dbReference type="GeneID" id="914815"/>
<dbReference type="GeneID" id="93774460"/>
<dbReference type="KEGG" id="ece:Z3904"/>
<dbReference type="KEGG" id="ecs:ECs_3473"/>
<dbReference type="PATRIC" id="fig|386585.9.peg.3627"/>
<dbReference type="eggNOG" id="COG0541">
    <property type="taxonomic scope" value="Bacteria"/>
</dbReference>
<dbReference type="HOGENOM" id="CLU_009301_6_0_6"/>
<dbReference type="OMA" id="GMTGQDA"/>
<dbReference type="Proteomes" id="UP000000558">
    <property type="component" value="Chromosome"/>
</dbReference>
<dbReference type="Proteomes" id="UP000002519">
    <property type="component" value="Chromosome"/>
</dbReference>
<dbReference type="GO" id="GO:0048500">
    <property type="term" value="C:signal recognition particle"/>
    <property type="evidence" value="ECO:0007669"/>
    <property type="project" value="UniProtKB-UniRule"/>
</dbReference>
<dbReference type="GO" id="GO:0008312">
    <property type="term" value="F:7S RNA binding"/>
    <property type="evidence" value="ECO:0007669"/>
    <property type="project" value="InterPro"/>
</dbReference>
<dbReference type="GO" id="GO:0016887">
    <property type="term" value="F:ATP hydrolysis activity"/>
    <property type="evidence" value="ECO:0007669"/>
    <property type="project" value="InterPro"/>
</dbReference>
<dbReference type="GO" id="GO:0005525">
    <property type="term" value="F:GTP binding"/>
    <property type="evidence" value="ECO:0007669"/>
    <property type="project" value="UniProtKB-UniRule"/>
</dbReference>
<dbReference type="GO" id="GO:0003924">
    <property type="term" value="F:GTPase activity"/>
    <property type="evidence" value="ECO:0007669"/>
    <property type="project" value="UniProtKB-UniRule"/>
</dbReference>
<dbReference type="GO" id="GO:0006614">
    <property type="term" value="P:SRP-dependent cotranslational protein targeting to membrane"/>
    <property type="evidence" value="ECO:0007669"/>
    <property type="project" value="InterPro"/>
</dbReference>
<dbReference type="CDD" id="cd18539">
    <property type="entry name" value="SRP_G"/>
    <property type="match status" value="1"/>
</dbReference>
<dbReference type="FunFam" id="3.40.50.300:FF:000022">
    <property type="entry name" value="Signal recognition particle 54 kDa subunit"/>
    <property type="match status" value="1"/>
</dbReference>
<dbReference type="FunFam" id="1.20.120.140:FF:000001">
    <property type="entry name" value="Signal recognition particle GTPase"/>
    <property type="match status" value="1"/>
</dbReference>
<dbReference type="FunFam" id="1.10.260.30:FF:000001">
    <property type="entry name" value="Signal recognition particle protein"/>
    <property type="match status" value="1"/>
</dbReference>
<dbReference type="Gene3D" id="3.40.50.300">
    <property type="entry name" value="P-loop containing nucleotide triphosphate hydrolases"/>
    <property type="match status" value="1"/>
</dbReference>
<dbReference type="Gene3D" id="1.20.120.140">
    <property type="entry name" value="Signal recognition particle SRP54, nucleotide-binding domain"/>
    <property type="match status" value="1"/>
</dbReference>
<dbReference type="Gene3D" id="1.10.260.30">
    <property type="entry name" value="Signal recognition particle, SRP54 subunit, M-domain"/>
    <property type="match status" value="1"/>
</dbReference>
<dbReference type="HAMAP" id="MF_00306">
    <property type="entry name" value="SRP54"/>
    <property type="match status" value="1"/>
</dbReference>
<dbReference type="InterPro" id="IPR003593">
    <property type="entry name" value="AAA+_ATPase"/>
</dbReference>
<dbReference type="InterPro" id="IPR027417">
    <property type="entry name" value="P-loop_NTPase"/>
</dbReference>
<dbReference type="InterPro" id="IPR036891">
    <property type="entry name" value="Signal_recog_part_SRP54_M_sf"/>
</dbReference>
<dbReference type="InterPro" id="IPR013822">
    <property type="entry name" value="Signal_recog_particl_SRP54_hlx"/>
</dbReference>
<dbReference type="InterPro" id="IPR004125">
    <property type="entry name" value="Signal_recog_particle_SRP54_M"/>
</dbReference>
<dbReference type="InterPro" id="IPR004780">
    <property type="entry name" value="SRP"/>
</dbReference>
<dbReference type="InterPro" id="IPR022941">
    <property type="entry name" value="SRP54"/>
</dbReference>
<dbReference type="InterPro" id="IPR000897">
    <property type="entry name" value="SRP54_GTPase_dom"/>
</dbReference>
<dbReference type="InterPro" id="IPR042101">
    <property type="entry name" value="SRP54_N_sf"/>
</dbReference>
<dbReference type="NCBIfam" id="TIGR00959">
    <property type="entry name" value="ffh"/>
    <property type="match status" value="1"/>
</dbReference>
<dbReference type="PANTHER" id="PTHR11564">
    <property type="entry name" value="SIGNAL RECOGNITION PARTICLE 54K PROTEIN SRP54"/>
    <property type="match status" value="1"/>
</dbReference>
<dbReference type="PANTHER" id="PTHR11564:SF5">
    <property type="entry name" value="SIGNAL RECOGNITION PARTICLE SUBUNIT SRP54"/>
    <property type="match status" value="1"/>
</dbReference>
<dbReference type="Pfam" id="PF00448">
    <property type="entry name" value="SRP54"/>
    <property type="match status" value="1"/>
</dbReference>
<dbReference type="Pfam" id="PF02881">
    <property type="entry name" value="SRP54_N"/>
    <property type="match status" value="1"/>
</dbReference>
<dbReference type="Pfam" id="PF02978">
    <property type="entry name" value="SRP_SPB"/>
    <property type="match status" value="1"/>
</dbReference>
<dbReference type="SMART" id="SM00382">
    <property type="entry name" value="AAA"/>
    <property type="match status" value="1"/>
</dbReference>
<dbReference type="SMART" id="SM00962">
    <property type="entry name" value="SRP54"/>
    <property type="match status" value="1"/>
</dbReference>
<dbReference type="SMART" id="SM00963">
    <property type="entry name" value="SRP54_N"/>
    <property type="match status" value="1"/>
</dbReference>
<dbReference type="SUPFAM" id="SSF52540">
    <property type="entry name" value="P-loop containing nucleoside triphosphate hydrolases"/>
    <property type="match status" value="1"/>
</dbReference>
<dbReference type="SUPFAM" id="SSF47446">
    <property type="entry name" value="Signal peptide-binding domain"/>
    <property type="match status" value="1"/>
</dbReference>
<dbReference type="PROSITE" id="PS00300">
    <property type="entry name" value="SRP54"/>
    <property type="match status" value="1"/>
</dbReference>
<proteinExistence type="inferred from homology"/>
<name>SRP54_ECO57</name>
<protein>
    <recommendedName>
        <fullName evidence="1">Signal recognition particle protein</fullName>
        <ecNumber evidence="1">3.6.5.4</ecNumber>
    </recommendedName>
    <alternativeName>
        <fullName evidence="1">Fifty-four homolog</fullName>
    </alternativeName>
</protein>
<sequence length="453" mass="49787">MFDNLTDRLSRTLRNISGRGRLTEDNVKDTLREVRMALLEADVALPVVREFINRVKEKAVGHEVNKSLTPGQEFVKIVRNELVAAMGEENQTLNLAAQPPAVVLMAGLQGAGKTTSVGKLGKFLREKHKKKVLVVSADVYRPAAIKQLETLAEQVGVDFFPSDVGQKPVDIVNAALKEAKLKFYDVLLVDTAGRLHVDEAMMDEIKQVHASINPVETLFVVDAMTGQDAANTAKAFNEALPLTGVVLTKVDGDARGGAALSIRHITGKPIKFLGVGEKTEALEPFHPDRIASRILGMGDVLSLIEDIESKVDRAQAEKLASKLKKGDGFDLNDFLEQLRQMKNMGGMASLMGKLPGMGQIPDNVKSQMDDKVLVRMEAIINSMTMKERAKPEIIKGSRKRRIAAGCGMQVQDVNRLLKQFDDMQRMMKKMKKGGMAKMMRSMKGMMPPGFPGR</sequence>
<organism>
    <name type="scientific">Escherichia coli O157:H7</name>
    <dbReference type="NCBI Taxonomy" id="83334"/>
    <lineage>
        <taxon>Bacteria</taxon>
        <taxon>Pseudomonadati</taxon>
        <taxon>Pseudomonadota</taxon>
        <taxon>Gammaproteobacteria</taxon>
        <taxon>Enterobacterales</taxon>
        <taxon>Enterobacteriaceae</taxon>
        <taxon>Escherichia</taxon>
    </lineage>
</organism>
<reference key="1">
    <citation type="journal article" date="2001" name="Nature">
        <title>Genome sequence of enterohaemorrhagic Escherichia coli O157:H7.</title>
        <authorList>
            <person name="Perna N.T."/>
            <person name="Plunkett G. III"/>
            <person name="Burland V."/>
            <person name="Mau B."/>
            <person name="Glasner J.D."/>
            <person name="Rose D.J."/>
            <person name="Mayhew G.F."/>
            <person name="Evans P.S."/>
            <person name="Gregor J."/>
            <person name="Kirkpatrick H.A."/>
            <person name="Posfai G."/>
            <person name="Hackett J."/>
            <person name="Klink S."/>
            <person name="Boutin A."/>
            <person name="Shao Y."/>
            <person name="Miller L."/>
            <person name="Grotbeck E.J."/>
            <person name="Davis N.W."/>
            <person name="Lim A."/>
            <person name="Dimalanta E.T."/>
            <person name="Potamousis K."/>
            <person name="Apodaca J."/>
            <person name="Anantharaman T.S."/>
            <person name="Lin J."/>
            <person name="Yen G."/>
            <person name="Schwartz D.C."/>
            <person name="Welch R.A."/>
            <person name="Blattner F.R."/>
        </authorList>
    </citation>
    <scope>NUCLEOTIDE SEQUENCE [LARGE SCALE GENOMIC DNA]</scope>
    <source>
        <strain>O157:H7 / EDL933 / ATCC 700927 / EHEC</strain>
    </source>
</reference>
<reference key="2">
    <citation type="journal article" date="2001" name="DNA Res.">
        <title>Complete genome sequence of enterohemorrhagic Escherichia coli O157:H7 and genomic comparison with a laboratory strain K-12.</title>
        <authorList>
            <person name="Hayashi T."/>
            <person name="Makino K."/>
            <person name="Ohnishi M."/>
            <person name="Kurokawa K."/>
            <person name="Ishii K."/>
            <person name="Yokoyama K."/>
            <person name="Han C.-G."/>
            <person name="Ohtsubo E."/>
            <person name="Nakayama K."/>
            <person name="Murata T."/>
            <person name="Tanaka M."/>
            <person name="Tobe T."/>
            <person name="Iida T."/>
            <person name="Takami H."/>
            <person name="Honda T."/>
            <person name="Sasakawa C."/>
            <person name="Ogasawara N."/>
            <person name="Yasunaga T."/>
            <person name="Kuhara S."/>
            <person name="Shiba T."/>
            <person name="Hattori M."/>
            <person name="Shinagawa H."/>
        </authorList>
    </citation>
    <scope>NUCLEOTIDE SEQUENCE [LARGE SCALE GENOMIC DNA]</scope>
    <source>
        <strain>O157:H7 / Sakai / RIMD 0509952 / EHEC</strain>
    </source>
</reference>